<proteinExistence type="inferred from homology"/>
<organism>
    <name type="scientific">Bacillus velezensis (strain DSM 23117 / BGSC 10A6 / LMG 26770 / FZB42)</name>
    <name type="common">Bacillus amyloliquefaciens subsp. plantarum</name>
    <dbReference type="NCBI Taxonomy" id="326423"/>
    <lineage>
        <taxon>Bacteria</taxon>
        <taxon>Bacillati</taxon>
        <taxon>Bacillota</taxon>
        <taxon>Bacilli</taxon>
        <taxon>Bacillales</taxon>
        <taxon>Bacillaceae</taxon>
        <taxon>Bacillus</taxon>
        <taxon>Bacillus amyloliquefaciens group</taxon>
    </lineage>
</organism>
<feature type="chain" id="PRO_1000050981" description="Putative 3-methyladenine DNA glycosylase">
    <location>
        <begin position="1"/>
        <end position="196"/>
    </location>
</feature>
<accession>A7ZA84</accession>
<evidence type="ECO:0000255" key="1">
    <source>
        <dbReference type="HAMAP-Rule" id="MF_00527"/>
    </source>
</evidence>
<reference key="1">
    <citation type="journal article" date="2007" name="Nat. Biotechnol.">
        <title>Comparative analysis of the complete genome sequence of the plant growth-promoting bacterium Bacillus amyloliquefaciens FZB42.</title>
        <authorList>
            <person name="Chen X.H."/>
            <person name="Koumoutsi A."/>
            <person name="Scholz R."/>
            <person name="Eisenreich A."/>
            <person name="Schneider K."/>
            <person name="Heinemeyer I."/>
            <person name="Morgenstern B."/>
            <person name="Voss B."/>
            <person name="Hess W.R."/>
            <person name="Reva O."/>
            <person name="Junge H."/>
            <person name="Voigt B."/>
            <person name="Jungblut P.R."/>
            <person name="Vater J."/>
            <person name="Suessmuth R."/>
            <person name="Liesegang H."/>
            <person name="Strittmatter A."/>
            <person name="Gottschalk G."/>
            <person name="Borriss R."/>
        </authorList>
    </citation>
    <scope>NUCLEOTIDE SEQUENCE [LARGE SCALE GENOMIC DNA]</scope>
    <source>
        <strain>DSM 23117 / BGSC 10A6 / LMG 26770 / FZB42</strain>
    </source>
</reference>
<dbReference type="EC" id="3.2.2.-" evidence="1"/>
<dbReference type="EMBL" id="CP000560">
    <property type="protein sequence ID" value="ABS75910.1"/>
    <property type="molecule type" value="Genomic_DNA"/>
</dbReference>
<dbReference type="RefSeq" id="WP_012118767.1">
    <property type="nucleotide sequence ID" value="NC_009725.2"/>
</dbReference>
<dbReference type="SMR" id="A7ZA84"/>
<dbReference type="GeneID" id="93082723"/>
<dbReference type="KEGG" id="bay:RBAM_035810"/>
<dbReference type="HOGENOM" id="CLU_060471_2_0_9"/>
<dbReference type="Proteomes" id="UP000001120">
    <property type="component" value="Chromosome"/>
</dbReference>
<dbReference type="GO" id="GO:0003905">
    <property type="term" value="F:alkylbase DNA N-glycosylase activity"/>
    <property type="evidence" value="ECO:0007669"/>
    <property type="project" value="InterPro"/>
</dbReference>
<dbReference type="GO" id="GO:0003677">
    <property type="term" value="F:DNA binding"/>
    <property type="evidence" value="ECO:0007669"/>
    <property type="project" value="InterPro"/>
</dbReference>
<dbReference type="GO" id="GO:0006284">
    <property type="term" value="P:base-excision repair"/>
    <property type="evidence" value="ECO:0007669"/>
    <property type="project" value="InterPro"/>
</dbReference>
<dbReference type="CDD" id="cd00540">
    <property type="entry name" value="AAG"/>
    <property type="match status" value="1"/>
</dbReference>
<dbReference type="FunFam" id="3.10.300.10:FF:000001">
    <property type="entry name" value="Putative 3-methyladenine DNA glycosylase"/>
    <property type="match status" value="1"/>
</dbReference>
<dbReference type="Gene3D" id="3.10.300.10">
    <property type="entry name" value="Methylpurine-DNA glycosylase (MPG)"/>
    <property type="match status" value="1"/>
</dbReference>
<dbReference type="HAMAP" id="MF_00527">
    <property type="entry name" value="3MGH"/>
    <property type="match status" value="1"/>
</dbReference>
<dbReference type="InterPro" id="IPR011034">
    <property type="entry name" value="Formyl_transferase-like_C_sf"/>
</dbReference>
<dbReference type="InterPro" id="IPR003180">
    <property type="entry name" value="MPG"/>
</dbReference>
<dbReference type="InterPro" id="IPR036995">
    <property type="entry name" value="MPG_sf"/>
</dbReference>
<dbReference type="NCBIfam" id="TIGR00567">
    <property type="entry name" value="3mg"/>
    <property type="match status" value="1"/>
</dbReference>
<dbReference type="NCBIfam" id="NF002002">
    <property type="entry name" value="PRK00802.1-2"/>
    <property type="match status" value="1"/>
</dbReference>
<dbReference type="PANTHER" id="PTHR10429">
    <property type="entry name" value="DNA-3-METHYLADENINE GLYCOSYLASE"/>
    <property type="match status" value="1"/>
</dbReference>
<dbReference type="PANTHER" id="PTHR10429:SF0">
    <property type="entry name" value="DNA-3-METHYLADENINE GLYCOSYLASE"/>
    <property type="match status" value="1"/>
</dbReference>
<dbReference type="Pfam" id="PF02245">
    <property type="entry name" value="Pur_DNA_glyco"/>
    <property type="match status" value="1"/>
</dbReference>
<dbReference type="SUPFAM" id="SSF50486">
    <property type="entry name" value="FMT C-terminal domain-like"/>
    <property type="match status" value="1"/>
</dbReference>
<comment type="similarity">
    <text evidence="1">Belongs to the DNA glycosylase MPG family.</text>
</comment>
<keyword id="KW-0227">DNA damage</keyword>
<keyword id="KW-0234">DNA repair</keyword>
<keyword id="KW-0378">Hydrolase</keyword>
<name>3MGH_BACVZ</name>
<gene>
    <name type="ordered locus">RBAM_035810</name>
</gene>
<protein>
    <recommendedName>
        <fullName evidence="1">Putative 3-methyladenine DNA glycosylase</fullName>
        <ecNumber evidence="1">3.2.2.-</ecNumber>
    </recommendedName>
</protein>
<sequence length="196" mass="21954">MAGEGKPLPIEFYQRPSVELAPLLLGCLLVKETDEGTASGFIVETEAYMGAEDRAAHSFGNRRTKRTEIMFHEAGRIYTYVMHTHTLMNVVAADIGIPQAVLIRAAEPHEGQFLMESRRPGRHPREWTNGPGKLTKAMGISMNDYGGMITEPPLYITEGFTPEHISTGPRIGIDNSGEARDYPWRYWVTGNRYVSR</sequence>